<keyword id="KW-0997">Cell inner membrane</keyword>
<keyword id="KW-1003">Cell membrane</keyword>
<keyword id="KW-0928">Hypersensitive response elicitation</keyword>
<keyword id="KW-0472">Membrane</keyword>
<keyword id="KW-0653">Protein transport</keyword>
<keyword id="KW-0812">Transmembrane</keyword>
<keyword id="KW-1133">Transmembrane helix</keyword>
<keyword id="KW-0813">Transport</keyword>
<reference key="1">
    <citation type="journal article" date="1992" name="Mol. Plant Microbe Interact.">
        <title>Determinants of pathogenicity in Xanthomonas campestris pv. vesicatoria are related to proteins involved in secretion in bacterial pathogens of animals.</title>
        <authorList>
            <person name="Fenselau S."/>
            <person name="Balbo I."/>
            <person name="Bonas U."/>
        </authorList>
    </citation>
    <scope>NUCLEOTIDE SEQUENCE [GENOMIC DNA]</scope>
    <source>
        <strain>Isolate 75-3</strain>
    </source>
</reference>
<gene>
    <name type="primary">hrpC2</name>
</gene>
<evidence type="ECO:0000250" key="1"/>
<evidence type="ECO:0000255" key="2"/>
<evidence type="ECO:0000256" key="3">
    <source>
        <dbReference type="SAM" id="MobiDB-lite"/>
    </source>
</evidence>
<evidence type="ECO:0000305" key="4"/>
<proteinExistence type="inferred from homology"/>
<feature type="chain" id="PRO_0000190023" description="Protein hrpC2">
    <location>
        <begin position="1"/>
        <end position="645"/>
    </location>
</feature>
<feature type="transmembrane region" description="Helical" evidence="2">
    <location>
        <begin position="18"/>
        <end position="34"/>
    </location>
</feature>
<feature type="transmembrane region" description="Helical" evidence="2">
    <location>
        <begin position="43"/>
        <end position="59"/>
    </location>
</feature>
<feature type="transmembrane region" description="Helical" evidence="2">
    <location>
        <begin position="108"/>
        <end position="124"/>
    </location>
</feature>
<feature type="transmembrane region" description="Helical" evidence="2">
    <location>
        <begin position="201"/>
        <end position="217"/>
    </location>
</feature>
<feature type="transmembrane region" description="Helical" evidence="2">
    <location>
        <begin position="243"/>
        <end position="259"/>
    </location>
</feature>
<feature type="transmembrane region" description="Helical" evidence="2">
    <location>
        <begin position="285"/>
        <end position="301"/>
    </location>
</feature>
<feature type="transmembrane region" description="Helical" evidence="2">
    <location>
        <begin position="308"/>
        <end position="324"/>
    </location>
</feature>
<feature type="region of interest" description="Disordered" evidence="3">
    <location>
        <begin position="334"/>
        <end position="354"/>
    </location>
</feature>
<protein>
    <recommendedName>
        <fullName>Protein hrpC2</fullName>
    </recommendedName>
</protein>
<dbReference type="EMBL" id="M99176">
    <property type="protein sequence ID" value="AAA27606.1"/>
    <property type="molecule type" value="Genomic_DNA"/>
</dbReference>
<dbReference type="RefSeq" id="WP_046934829.1">
    <property type="nucleotide sequence ID" value="NZ_CP018467.1"/>
</dbReference>
<dbReference type="SMR" id="P80150"/>
<dbReference type="PATRIC" id="fig|456327.29.peg.3437"/>
<dbReference type="GO" id="GO:0005886">
    <property type="term" value="C:plasma membrane"/>
    <property type="evidence" value="ECO:0007669"/>
    <property type="project" value="UniProtKB-SubCell"/>
</dbReference>
<dbReference type="GO" id="GO:0009306">
    <property type="term" value="P:protein secretion"/>
    <property type="evidence" value="ECO:0007669"/>
    <property type="project" value="InterPro"/>
</dbReference>
<dbReference type="GO" id="GO:0052040">
    <property type="term" value="P:symbiont-mediated perturbation of host programmed cell death"/>
    <property type="evidence" value="ECO:0007669"/>
    <property type="project" value="UniProtKB-KW"/>
</dbReference>
<dbReference type="Gene3D" id="3.40.30.60">
    <property type="entry name" value="FHIPEP family, domain 1"/>
    <property type="match status" value="1"/>
</dbReference>
<dbReference type="Gene3D" id="1.10.8.540">
    <property type="entry name" value="FHIPEP family, domain 3"/>
    <property type="match status" value="1"/>
</dbReference>
<dbReference type="Gene3D" id="3.40.50.12790">
    <property type="entry name" value="FHIPEP family, domain 4"/>
    <property type="match status" value="1"/>
</dbReference>
<dbReference type="InterPro" id="IPR042194">
    <property type="entry name" value="FHIPEP_1"/>
</dbReference>
<dbReference type="InterPro" id="IPR042193">
    <property type="entry name" value="FHIPEP_3"/>
</dbReference>
<dbReference type="InterPro" id="IPR042196">
    <property type="entry name" value="FHIPEP_4"/>
</dbReference>
<dbReference type="InterPro" id="IPR025505">
    <property type="entry name" value="FHIPEP_CS"/>
</dbReference>
<dbReference type="InterPro" id="IPR001712">
    <property type="entry name" value="T3SS_FHIPEP"/>
</dbReference>
<dbReference type="PANTHER" id="PTHR30161">
    <property type="entry name" value="FLAGELLAR EXPORT PROTEIN, MEMBRANE FLHA SUBUNIT-RELATED"/>
    <property type="match status" value="1"/>
</dbReference>
<dbReference type="PANTHER" id="PTHR30161:SF2">
    <property type="entry name" value="INVASION PROTEIN INVA"/>
    <property type="match status" value="1"/>
</dbReference>
<dbReference type="Pfam" id="PF00771">
    <property type="entry name" value="FHIPEP"/>
    <property type="match status" value="2"/>
</dbReference>
<dbReference type="PIRSF" id="PIRSF005419">
    <property type="entry name" value="FlhA"/>
    <property type="match status" value="1"/>
</dbReference>
<dbReference type="PRINTS" id="PR00949">
    <property type="entry name" value="TYPE3IMAPROT"/>
</dbReference>
<dbReference type="PROSITE" id="PS00994">
    <property type="entry name" value="FHIPEP"/>
    <property type="match status" value="1"/>
</dbReference>
<comment type="function">
    <text evidence="1">Involved in the secretion of a proteinaceous elicitor of the hypersensitivity response in plants.</text>
</comment>
<comment type="subcellular location">
    <subcellularLocation>
        <location evidence="4">Cell inner membrane</location>
        <topology evidence="4">Multi-pass membrane protein</topology>
    </subcellularLocation>
</comment>
<comment type="similarity">
    <text evidence="4">Belongs to the FHIPEP (flagella/HR/invasion proteins export pore) family.</text>
</comment>
<accession>P80150</accession>
<organism>
    <name type="scientific">Xanthomonas euvesicatoria</name>
    <dbReference type="NCBI Taxonomy" id="456327"/>
    <lineage>
        <taxon>Bacteria</taxon>
        <taxon>Pseudomonadati</taxon>
        <taxon>Pseudomonadota</taxon>
        <taxon>Gammaproteobacteria</taxon>
        <taxon>Lysobacterales</taxon>
        <taxon>Lysobacteraceae</taxon>
        <taxon>Xanthomonas</taxon>
    </lineage>
</organism>
<name>HRC2_XANEU</name>
<sequence>MLGDRVRATRYFAYSGEVAIAALVVAVIGLMILPLPTPMIDTLLGINITLSVVLLMVTMYVPDSISLSSFPSLLLFTTLLRLSLNIASTKSILLHAEAGHIIESFGELVVGGNLVVGLVVFLIITTVQFIVIAKGSERVAEVGARFTLDAMPGKQMSIDADLRGGNLTADEARRKRARLAMESQLHGGMDGAMKFVKGDAIAGLVITMVNILAGIVVGVTYHGMTAGDAANRFAILSVGDAMVSQIASLLISVAAGVMITRVANENETRLSSLGLDIGRQLTSNARALMAASVLLACFAFVPGFPAVLFLLLAAAVGAGGYTIWRKQRDISGTDQRKLPSASRKGAKGEAPHIRKNAPDFASPLSMRLSPQLAALLDPARLDQAIESERRQLVELLGLPFPGIAIWQTESLQGMQYEVLIHDVPETRAELENTDDMQAALARQAISPLHARAHLFVGIQETQWMLEQVAVDYPGLVAEVNKAMPAQRIADVLRRLLEERIPVRNIKSILESLVVWGPKEKDLLMLTEYVRCDLGRYLAHTATAGTGQLPAVMLDHAVEQLIRQSIRATAAGNFLALPPEQANQLVEQVERIVGDHAQHPLAVVASMDVRRYVRRMIEARLTWLQVYSFQELGSEVQLQPIGRVVV</sequence>